<feature type="chain" id="PRO_1000019440" description="Cysteine desulfurase IscS">
    <location>
        <begin position="1"/>
        <end position="404"/>
    </location>
</feature>
<feature type="active site" description="Cysteine persulfide intermediate" evidence="1">
    <location>
        <position position="328"/>
    </location>
</feature>
<feature type="binding site" evidence="1">
    <location>
        <begin position="75"/>
        <end position="76"/>
    </location>
    <ligand>
        <name>pyridoxal 5'-phosphate</name>
        <dbReference type="ChEBI" id="CHEBI:597326"/>
    </ligand>
</feature>
<feature type="binding site" evidence="1">
    <location>
        <position position="155"/>
    </location>
    <ligand>
        <name>pyridoxal 5'-phosphate</name>
        <dbReference type="ChEBI" id="CHEBI:597326"/>
    </ligand>
</feature>
<feature type="binding site" evidence="1">
    <location>
        <position position="183"/>
    </location>
    <ligand>
        <name>pyridoxal 5'-phosphate</name>
        <dbReference type="ChEBI" id="CHEBI:597326"/>
    </ligand>
</feature>
<feature type="binding site" evidence="1">
    <location>
        <begin position="203"/>
        <end position="205"/>
    </location>
    <ligand>
        <name>pyridoxal 5'-phosphate</name>
        <dbReference type="ChEBI" id="CHEBI:597326"/>
    </ligand>
</feature>
<feature type="binding site" evidence="1">
    <location>
        <position position="243"/>
    </location>
    <ligand>
        <name>pyridoxal 5'-phosphate</name>
        <dbReference type="ChEBI" id="CHEBI:597326"/>
    </ligand>
</feature>
<feature type="binding site" description="via persulfide group" evidence="1">
    <location>
        <position position="328"/>
    </location>
    <ligand>
        <name>[2Fe-2S] cluster</name>
        <dbReference type="ChEBI" id="CHEBI:190135"/>
        <note>ligand shared with IscU</note>
    </ligand>
</feature>
<feature type="modified residue" description="N6-(pyridoxal phosphate)lysine" evidence="1">
    <location>
        <position position="206"/>
    </location>
</feature>
<sequence length="404" mass="44800">MKLPIYFDYAATTPVDPRVAQKMMQYMTMDGIFGNPASRSHRYGWQAEEAVDVARSQVADLINADHREIVFTSGATESNNLAIKGVAHFYQKKGKHIITSKTEHKAVLDTCRQLEREGFEVTYLEPGVNGIIPMERLEAAMRDDTILLSLMHVNNEIGVVHDIDAIGELCRSKGIIFHVDAAQSAGKLPIDVQITKVDLMSISGHKMYGPKGIGALYVRRKPRIRLESQMHGGGHERGMRSGTLATHQIVGLGEAAAIAKADMESDNARIHALRDRLWNGIKDIEETYVNGDFEQRYCGNLNVSFNFVEGESLMMALKDLAVSSGSACTSASLEPSYVLRALGLSDEMAHSSIRFSIGRFTTEEEVDYAIGIIQGSIGKLREMSPLWEMFKDGVDLSKVEWVHH</sequence>
<keyword id="KW-0001">2Fe-2S</keyword>
<keyword id="KW-0963">Cytoplasm</keyword>
<keyword id="KW-0408">Iron</keyword>
<keyword id="KW-0411">Iron-sulfur</keyword>
<keyword id="KW-0479">Metal-binding</keyword>
<keyword id="KW-0663">Pyridoxal phosphate</keyword>
<keyword id="KW-1185">Reference proteome</keyword>
<keyword id="KW-0808">Transferase</keyword>
<organism>
    <name type="scientific">Shewanella amazonensis (strain ATCC BAA-1098 / SB2B)</name>
    <dbReference type="NCBI Taxonomy" id="326297"/>
    <lineage>
        <taxon>Bacteria</taxon>
        <taxon>Pseudomonadati</taxon>
        <taxon>Pseudomonadota</taxon>
        <taxon>Gammaproteobacteria</taxon>
        <taxon>Alteromonadales</taxon>
        <taxon>Shewanellaceae</taxon>
        <taxon>Shewanella</taxon>
    </lineage>
</organism>
<comment type="function">
    <text evidence="1">Master enzyme that delivers sulfur to a number of partners involved in Fe-S cluster assembly, tRNA modification or cofactor biosynthesis. Catalyzes the removal of elemental sulfur atoms from cysteine to produce alanine. Functions as a sulfur delivery protein for Fe-S cluster synthesis onto IscU, an Fe-S scaffold assembly protein, as well as other S acceptor proteins.</text>
</comment>
<comment type="catalytic activity">
    <reaction evidence="1">
        <text>(sulfur carrier)-H + L-cysteine = (sulfur carrier)-SH + L-alanine</text>
        <dbReference type="Rhea" id="RHEA:43892"/>
        <dbReference type="Rhea" id="RHEA-COMP:14737"/>
        <dbReference type="Rhea" id="RHEA-COMP:14739"/>
        <dbReference type="ChEBI" id="CHEBI:29917"/>
        <dbReference type="ChEBI" id="CHEBI:35235"/>
        <dbReference type="ChEBI" id="CHEBI:57972"/>
        <dbReference type="ChEBI" id="CHEBI:64428"/>
        <dbReference type="EC" id="2.8.1.7"/>
    </reaction>
</comment>
<comment type="cofactor">
    <cofactor evidence="1">
        <name>pyridoxal 5'-phosphate</name>
        <dbReference type="ChEBI" id="CHEBI:597326"/>
    </cofactor>
</comment>
<comment type="pathway">
    <text evidence="1">Cofactor biosynthesis; iron-sulfur cluster biosynthesis.</text>
</comment>
<comment type="subunit">
    <text evidence="1">Homodimer. Forms a heterotetramer with IscU, interacts with other sulfur acceptors.</text>
</comment>
<comment type="subcellular location">
    <subcellularLocation>
        <location evidence="1">Cytoplasm</location>
    </subcellularLocation>
</comment>
<comment type="similarity">
    <text evidence="1">Belongs to the class-V pyridoxal-phosphate-dependent aminotransferase family. NifS/IscS subfamily.</text>
</comment>
<accession>A1S544</accession>
<dbReference type="EC" id="2.8.1.7" evidence="1"/>
<dbReference type="EMBL" id="CP000507">
    <property type="protein sequence ID" value="ABL99500.1"/>
    <property type="molecule type" value="Genomic_DNA"/>
</dbReference>
<dbReference type="RefSeq" id="WP_011759409.1">
    <property type="nucleotide sequence ID" value="NC_008700.1"/>
</dbReference>
<dbReference type="SMR" id="A1S544"/>
<dbReference type="STRING" id="326297.Sama_1293"/>
<dbReference type="KEGG" id="saz:Sama_1293"/>
<dbReference type="eggNOG" id="COG1104">
    <property type="taxonomic scope" value="Bacteria"/>
</dbReference>
<dbReference type="HOGENOM" id="CLU_003433_0_2_6"/>
<dbReference type="OrthoDB" id="9808002at2"/>
<dbReference type="UniPathway" id="UPA00266"/>
<dbReference type="Proteomes" id="UP000009175">
    <property type="component" value="Chromosome"/>
</dbReference>
<dbReference type="GO" id="GO:1990221">
    <property type="term" value="C:L-cysteine desulfurase complex"/>
    <property type="evidence" value="ECO:0007669"/>
    <property type="project" value="UniProtKB-ARBA"/>
</dbReference>
<dbReference type="GO" id="GO:0051537">
    <property type="term" value="F:2 iron, 2 sulfur cluster binding"/>
    <property type="evidence" value="ECO:0007669"/>
    <property type="project" value="UniProtKB-UniRule"/>
</dbReference>
<dbReference type="GO" id="GO:0031071">
    <property type="term" value="F:cysteine desulfurase activity"/>
    <property type="evidence" value="ECO:0007669"/>
    <property type="project" value="UniProtKB-UniRule"/>
</dbReference>
<dbReference type="GO" id="GO:0046872">
    <property type="term" value="F:metal ion binding"/>
    <property type="evidence" value="ECO:0007669"/>
    <property type="project" value="UniProtKB-KW"/>
</dbReference>
<dbReference type="GO" id="GO:0030170">
    <property type="term" value="F:pyridoxal phosphate binding"/>
    <property type="evidence" value="ECO:0007669"/>
    <property type="project" value="UniProtKB-UniRule"/>
</dbReference>
<dbReference type="GO" id="GO:0044571">
    <property type="term" value="P:[2Fe-2S] cluster assembly"/>
    <property type="evidence" value="ECO:0007669"/>
    <property type="project" value="UniProtKB-UniRule"/>
</dbReference>
<dbReference type="FunFam" id="3.40.640.10:FF:000003">
    <property type="entry name" value="Cysteine desulfurase IscS"/>
    <property type="match status" value="1"/>
</dbReference>
<dbReference type="FunFam" id="3.90.1150.10:FF:000002">
    <property type="entry name" value="Cysteine desulfurase IscS"/>
    <property type="match status" value="1"/>
</dbReference>
<dbReference type="Gene3D" id="3.90.1150.10">
    <property type="entry name" value="Aspartate Aminotransferase, domain 1"/>
    <property type="match status" value="1"/>
</dbReference>
<dbReference type="Gene3D" id="3.40.640.10">
    <property type="entry name" value="Type I PLP-dependent aspartate aminotransferase-like (Major domain)"/>
    <property type="match status" value="1"/>
</dbReference>
<dbReference type="HAMAP" id="MF_00331">
    <property type="entry name" value="Cys_desulf_IscS"/>
    <property type="match status" value="1"/>
</dbReference>
<dbReference type="InterPro" id="IPR000192">
    <property type="entry name" value="Aminotrans_V_dom"/>
</dbReference>
<dbReference type="InterPro" id="IPR020578">
    <property type="entry name" value="Aminotrans_V_PyrdxlP_BS"/>
</dbReference>
<dbReference type="InterPro" id="IPR010240">
    <property type="entry name" value="Cys_deSase_IscS"/>
</dbReference>
<dbReference type="InterPro" id="IPR016454">
    <property type="entry name" value="Cysteine_dSase"/>
</dbReference>
<dbReference type="InterPro" id="IPR015424">
    <property type="entry name" value="PyrdxlP-dep_Trfase"/>
</dbReference>
<dbReference type="InterPro" id="IPR015421">
    <property type="entry name" value="PyrdxlP-dep_Trfase_major"/>
</dbReference>
<dbReference type="InterPro" id="IPR015422">
    <property type="entry name" value="PyrdxlP-dep_Trfase_small"/>
</dbReference>
<dbReference type="NCBIfam" id="TIGR02006">
    <property type="entry name" value="IscS"/>
    <property type="match status" value="1"/>
</dbReference>
<dbReference type="NCBIfam" id="NF010611">
    <property type="entry name" value="PRK14012.1"/>
    <property type="match status" value="1"/>
</dbReference>
<dbReference type="PANTHER" id="PTHR11601:SF34">
    <property type="entry name" value="CYSTEINE DESULFURASE"/>
    <property type="match status" value="1"/>
</dbReference>
<dbReference type="PANTHER" id="PTHR11601">
    <property type="entry name" value="CYSTEINE DESULFURYLASE FAMILY MEMBER"/>
    <property type="match status" value="1"/>
</dbReference>
<dbReference type="Pfam" id="PF00266">
    <property type="entry name" value="Aminotran_5"/>
    <property type="match status" value="1"/>
</dbReference>
<dbReference type="PIRSF" id="PIRSF005572">
    <property type="entry name" value="NifS"/>
    <property type="match status" value="1"/>
</dbReference>
<dbReference type="SUPFAM" id="SSF53383">
    <property type="entry name" value="PLP-dependent transferases"/>
    <property type="match status" value="1"/>
</dbReference>
<dbReference type="PROSITE" id="PS00595">
    <property type="entry name" value="AA_TRANSFER_CLASS_5"/>
    <property type="match status" value="1"/>
</dbReference>
<evidence type="ECO:0000255" key="1">
    <source>
        <dbReference type="HAMAP-Rule" id="MF_00331"/>
    </source>
</evidence>
<proteinExistence type="inferred from homology"/>
<name>ISCS_SHEAM</name>
<reference key="1">
    <citation type="submission" date="2006-12" db="EMBL/GenBank/DDBJ databases">
        <title>Complete sequence of Shewanella amazonensis SB2B.</title>
        <authorList>
            <consortium name="US DOE Joint Genome Institute"/>
            <person name="Copeland A."/>
            <person name="Lucas S."/>
            <person name="Lapidus A."/>
            <person name="Barry K."/>
            <person name="Detter J.C."/>
            <person name="Glavina del Rio T."/>
            <person name="Hammon N."/>
            <person name="Israni S."/>
            <person name="Dalin E."/>
            <person name="Tice H."/>
            <person name="Pitluck S."/>
            <person name="Munk A.C."/>
            <person name="Brettin T."/>
            <person name="Bruce D."/>
            <person name="Han C."/>
            <person name="Tapia R."/>
            <person name="Gilna P."/>
            <person name="Schmutz J."/>
            <person name="Larimer F."/>
            <person name="Land M."/>
            <person name="Hauser L."/>
            <person name="Kyrpides N."/>
            <person name="Mikhailova N."/>
            <person name="Fredrickson J."/>
            <person name="Richardson P."/>
        </authorList>
    </citation>
    <scope>NUCLEOTIDE SEQUENCE [LARGE SCALE GENOMIC DNA]</scope>
    <source>
        <strain>ATCC BAA-1098 / SB2B</strain>
    </source>
</reference>
<protein>
    <recommendedName>
        <fullName evidence="1">Cysteine desulfurase IscS</fullName>
        <ecNumber evidence="1">2.8.1.7</ecNumber>
    </recommendedName>
</protein>
<gene>
    <name evidence="1" type="primary">iscS</name>
    <name type="ordered locus">Sama_1293</name>
</gene>